<dbReference type="EC" id="4.1.99.17" evidence="1"/>
<dbReference type="EMBL" id="CP000350">
    <property type="protein sequence ID" value="ABJ75119.1"/>
    <property type="molecule type" value="Genomic_DNA"/>
</dbReference>
<dbReference type="RefSeq" id="WP_011671526.1">
    <property type="nucleotide sequence ID" value="NC_008510.1"/>
</dbReference>
<dbReference type="SMR" id="Q04VF1"/>
<dbReference type="KEGG" id="lbj:LBJ_0403"/>
<dbReference type="HOGENOM" id="CLU_013181_2_1_12"/>
<dbReference type="UniPathway" id="UPA00060"/>
<dbReference type="Proteomes" id="UP000000656">
    <property type="component" value="Chromosome 1"/>
</dbReference>
<dbReference type="GO" id="GO:0005829">
    <property type="term" value="C:cytosol"/>
    <property type="evidence" value="ECO:0007669"/>
    <property type="project" value="TreeGrafter"/>
</dbReference>
<dbReference type="GO" id="GO:0051539">
    <property type="term" value="F:4 iron, 4 sulfur cluster binding"/>
    <property type="evidence" value="ECO:0007669"/>
    <property type="project" value="UniProtKB-KW"/>
</dbReference>
<dbReference type="GO" id="GO:0016830">
    <property type="term" value="F:carbon-carbon lyase activity"/>
    <property type="evidence" value="ECO:0007669"/>
    <property type="project" value="InterPro"/>
</dbReference>
<dbReference type="GO" id="GO:0008270">
    <property type="term" value="F:zinc ion binding"/>
    <property type="evidence" value="ECO:0007669"/>
    <property type="project" value="UniProtKB-UniRule"/>
</dbReference>
<dbReference type="GO" id="GO:0009228">
    <property type="term" value="P:thiamine biosynthetic process"/>
    <property type="evidence" value="ECO:0007669"/>
    <property type="project" value="UniProtKB-KW"/>
</dbReference>
<dbReference type="GO" id="GO:0009229">
    <property type="term" value="P:thiamine diphosphate biosynthetic process"/>
    <property type="evidence" value="ECO:0007669"/>
    <property type="project" value="UniProtKB-UniRule"/>
</dbReference>
<dbReference type="FunFam" id="3.20.20.540:FF:000001">
    <property type="entry name" value="Phosphomethylpyrimidine synthase"/>
    <property type="match status" value="1"/>
</dbReference>
<dbReference type="Gene3D" id="6.10.250.620">
    <property type="match status" value="1"/>
</dbReference>
<dbReference type="Gene3D" id="3.20.20.540">
    <property type="entry name" value="Radical SAM ThiC family, central domain"/>
    <property type="match status" value="1"/>
</dbReference>
<dbReference type="HAMAP" id="MF_00089">
    <property type="entry name" value="ThiC"/>
    <property type="match status" value="1"/>
</dbReference>
<dbReference type="InterPro" id="IPR037509">
    <property type="entry name" value="ThiC"/>
</dbReference>
<dbReference type="InterPro" id="IPR038521">
    <property type="entry name" value="ThiC/Bza_core_dom"/>
</dbReference>
<dbReference type="InterPro" id="IPR002817">
    <property type="entry name" value="ThiC/BzaA/B"/>
</dbReference>
<dbReference type="NCBIfam" id="NF006763">
    <property type="entry name" value="PRK09284.1"/>
    <property type="match status" value="1"/>
</dbReference>
<dbReference type="NCBIfam" id="NF009895">
    <property type="entry name" value="PRK13352.1"/>
    <property type="match status" value="1"/>
</dbReference>
<dbReference type="NCBIfam" id="TIGR00190">
    <property type="entry name" value="thiC"/>
    <property type="match status" value="1"/>
</dbReference>
<dbReference type="PANTHER" id="PTHR30557:SF1">
    <property type="entry name" value="PHOSPHOMETHYLPYRIMIDINE SYNTHASE, CHLOROPLASTIC"/>
    <property type="match status" value="1"/>
</dbReference>
<dbReference type="PANTHER" id="PTHR30557">
    <property type="entry name" value="THIAMINE BIOSYNTHESIS PROTEIN THIC"/>
    <property type="match status" value="1"/>
</dbReference>
<dbReference type="Pfam" id="PF01964">
    <property type="entry name" value="ThiC_Rad_SAM"/>
    <property type="match status" value="1"/>
</dbReference>
<dbReference type="SFLD" id="SFLDF00407">
    <property type="entry name" value="phosphomethylpyrimidine_syntha"/>
    <property type="match status" value="1"/>
</dbReference>
<dbReference type="SFLD" id="SFLDG01114">
    <property type="entry name" value="phosphomethylpyrimidine_syntha"/>
    <property type="match status" value="1"/>
</dbReference>
<dbReference type="SFLD" id="SFLDS00113">
    <property type="entry name" value="Radical_SAM_Phosphomethylpyrim"/>
    <property type="match status" value="1"/>
</dbReference>
<feature type="chain" id="PRO_1000004766" description="Phosphomethylpyrimidine synthase">
    <location>
        <begin position="1"/>
        <end position="511"/>
    </location>
</feature>
<feature type="region of interest" description="Disordered" evidence="2">
    <location>
        <begin position="492"/>
        <end position="511"/>
    </location>
</feature>
<feature type="binding site" evidence="1">
    <location>
        <position position="127"/>
    </location>
    <ligand>
        <name>substrate</name>
    </ligand>
</feature>
<feature type="binding site" evidence="1">
    <location>
        <position position="156"/>
    </location>
    <ligand>
        <name>substrate</name>
    </ligand>
</feature>
<feature type="binding site" evidence="1">
    <location>
        <position position="185"/>
    </location>
    <ligand>
        <name>substrate</name>
    </ligand>
</feature>
<feature type="binding site" evidence="1">
    <location>
        <position position="221"/>
    </location>
    <ligand>
        <name>substrate</name>
    </ligand>
</feature>
<feature type="binding site" evidence="1">
    <location>
        <begin position="241"/>
        <end position="243"/>
    </location>
    <ligand>
        <name>substrate</name>
    </ligand>
</feature>
<feature type="binding site" evidence="1">
    <location>
        <begin position="282"/>
        <end position="285"/>
    </location>
    <ligand>
        <name>substrate</name>
    </ligand>
</feature>
<feature type="binding site" evidence="1">
    <location>
        <position position="321"/>
    </location>
    <ligand>
        <name>substrate</name>
    </ligand>
</feature>
<feature type="binding site" evidence="1">
    <location>
        <position position="325"/>
    </location>
    <ligand>
        <name>Zn(2+)</name>
        <dbReference type="ChEBI" id="CHEBI:29105"/>
    </ligand>
</feature>
<feature type="binding site" evidence="1">
    <location>
        <position position="348"/>
    </location>
    <ligand>
        <name>substrate</name>
    </ligand>
</feature>
<feature type="binding site" evidence="1">
    <location>
        <position position="389"/>
    </location>
    <ligand>
        <name>Zn(2+)</name>
        <dbReference type="ChEBI" id="CHEBI:29105"/>
    </ligand>
</feature>
<feature type="binding site" evidence="1">
    <location>
        <position position="469"/>
    </location>
    <ligand>
        <name>[4Fe-4S] cluster</name>
        <dbReference type="ChEBI" id="CHEBI:49883"/>
        <note>4Fe-4S-S-AdoMet</note>
    </ligand>
</feature>
<feature type="binding site" evidence="1">
    <location>
        <position position="472"/>
    </location>
    <ligand>
        <name>[4Fe-4S] cluster</name>
        <dbReference type="ChEBI" id="CHEBI:49883"/>
        <note>4Fe-4S-S-AdoMet</note>
    </ligand>
</feature>
<feature type="binding site" evidence="1">
    <location>
        <position position="477"/>
    </location>
    <ligand>
        <name>[4Fe-4S] cluster</name>
        <dbReference type="ChEBI" id="CHEBI:49883"/>
        <note>4Fe-4S-S-AdoMet</note>
    </ligand>
</feature>
<evidence type="ECO:0000255" key="1">
    <source>
        <dbReference type="HAMAP-Rule" id="MF_00089"/>
    </source>
</evidence>
<evidence type="ECO:0000256" key="2">
    <source>
        <dbReference type="SAM" id="MobiDB-lite"/>
    </source>
</evidence>
<protein>
    <recommendedName>
        <fullName evidence="1">Phosphomethylpyrimidine synthase</fullName>
        <ecNumber evidence="1">4.1.99.17</ecNumber>
    </recommendedName>
    <alternativeName>
        <fullName evidence="1">Hydroxymethylpyrimidine phosphate synthase</fullName>
        <shortName evidence="1">HMP-P synthase</shortName>
        <shortName evidence="1">HMP-phosphate synthase</shortName>
        <shortName evidence="1">HMPP synthase</shortName>
    </alternativeName>
    <alternativeName>
        <fullName evidence="1">Thiamine biosynthesis protein ThiC</fullName>
    </alternativeName>
</protein>
<reference key="1">
    <citation type="journal article" date="2006" name="Proc. Natl. Acad. Sci. U.S.A.">
        <title>Genome reduction in Leptospira borgpetersenii reflects limited transmission potential.</title>
        <authorList>
            <person name="Bulach D.M."/>
            <person name="Zuerner R.L."/>
            <person name="Wilson P."/>
            <person name="Seemann T."/>
            <person name="McGrath A."/>
            <person name="Cullen P.A."/>
            <person name="Davis J."/>
            <person name="Johnson M."/>
            <person name="Kuczek E."/>
            <person name="Alt D.P."/>
            <person name="Peterson-Burch B."/>
            <person name="Coppel R.L."/>
            <person name="Rood J.I."/>
            <person name="Davies J.K."/>
            <person name="Adler B."/>
        </authorList>
    </citation>
    <scope>NUCLEOTIDE SEQUENCE [LARGE SCALE GENOMIC DNA]</scope>
    <source>
        <strain>JB197</strain>
    </source>
</reference>
<name>THIC_LEPBJ</name>
<accession>Q04VF1</accession>
<comment type="function">
    <text evidence="1">Catalyzes the synthesis of the hydroxymethylpyrimidine phosphate (HMP-P) moiety of thiamine from aminoimidazole ribotide (AIR) in a radical S-adenosyl-L-methionine (SAM)-dependent reaction.</text>
</comment>
<comment type="catalytic activity">
    <reaction evidence="1">
        <text>5-amino-1-(5-phospho-beta-D-ribosyl)imidazole + S-adenosyl-L-methionine = 4-amino-2-methyl-5-(phosphooxymethyl)pyrimidine + CO + 5'-deoxyadenosine + formate + L-methionine + 3 H(+)</text>
        <dbReference type="Rhea" id="RHEA:24840"/>
        <dbReference type="ChEBI" id="CHEBI:15378"/>
        <dbReference type="ChEBI" id="CHEBI:15740"/>
        <dbReference type="ChEBI" id="CHEBI:17245"/>
        <dbReference type="ChEBI" id="CHEBI:17319"/>
        <dbReference type="ChEBI" id="CHEBI:57844"/>
        <dbReference type="ChEBI" id="CHEBI:58354"/>
        <dbReference type="ChEBI" id="CHEBI:59789"/>
        <dbReference type="ChEBI" id="CHEBI:137981"/>
        <dbReference type="EC" id="4.1.99.17"/>
    </reaction>
</comment>
<comment type="cofactor">
    <cofactor evidence="1">
        <name>[4Fe-4S] cluster</name>
        <dbReference type="ChEBI" id="CHEBI:49883"/>
    </cofactor>
    <text evidence="1">Binds 1 [4Fe-4S] cluster per subunit. The cluster is coordinated with 3 cysteines and an exchangeable S-adenosyl-L-methionine.</text>
</comment>
<comment type="pathway">
    <text evidence="1">Cofactor biosynthesis; thiamine diphosphate biosynthesis.</text>
</comment>
<comment type="similarity">
    <text evidence="1">Belongs to the ThiC family.</text>
</comment>
<proteinExistence type="inferred from homology"/>
<keyword id="KW-0004">4Fe-4S</keyword>
<keyword id="KW-0408">Iron</keyword>
<keyword id="KW-0411">Iron-sulfur</keyword>
<keyword id="KW-0456">Lyase</keyword>
<keyword id="KW-0479">Metal-binding</keyword>
<keyword id="KW-0949">S-adenosyl-L-methionine</keyword>
<keyword id="KW-0784">Thiamine biosynthesis</keyword>
<keyword id="KW-0862">Zinc</keyword>
<organism>
    <name type="scientific">Leptospira borgpetersenii serovar Hardjo-bovis (strain JB197)</name>
    <dbReference type="NCBI Taxonomy" id="355277"/>
    <lineage>
        <taxon>Bacteria</taxon>
        <taxon>Pseudomonadati</taxon>
        <taxon>Spirochaetota</taxon>
        <taxon>Spirochaetia</taxon>
        <taxon>Leptospirales</taxon>
        <taxon>Leptospiraceae</taxon>
        <taxon>Leptospira</taxon>
    </lineage>
</organism>
<gene>
    <name evidence="1" type="primary">thiC</name>
    <name type="ordered locus">LBJ_0403</name>
</gene>
<sequence length="511" mass="57751">MESTQEFQVPLKTIRLTDGTEYQSYHTEGSLSDKKPSDYKNGIPKIRKEWIRTRLDRGDTNHSQMYYAKKGIITEEMRYVALRENMNPEFVRLEIACGRAILPSNRNHPELEPMIIGRNFLVKINANIGNSALGSSIEEEVEKLHWAVKWGADTVMDLSTGKNIHETREWILRNSPVPIGTVPIYQALEKVKGKAENLNIQVFLDTLEERAEQGVDYFTIHAGVLLHYIPFTANRVTGIVSRGGSILAKWCLAHHKENFLYTHFDEIIKVMKKYGVSFSLGDGLRPGSIADANDKAQFGELETLGELTKRAWEEDIQVMIEGPGHVPMHLIKENVDLQMKLCQEAPFYTLGPLVTDIAPGYDHITSAIGAAMIGWFGMAMLCYVTPKEHLGLPDKEDVKQGVIAYKIAAHAADLAKGHPGAIKRDNLLSKARFEFRWEDQFALSLDPETAKSFHDETLPQDRMKTAHFCSMCGPHFCSMNLTQELRKFAQEKGMEEKSEVTICNRKKESGK</sequence>